<gene>
    <name type="primary">PIN</name>
</gene>
<proteinExistence type="evidence at protein level"/>
<organism>
    <name type="scientific">Aplysia californica</name>
    <name type="common">California sea hare</name>
    <dbReference type="NCBI Taxonomy" id="6500"/>
    <lineage>
        <taxon>Eukaryota</taxon>
        <taxon>Metazoa</taxon>
        <taxon>Spiralia</taxon>
        <taxon>Lophotrochozoa</taxon>
        <taxon>Mollusca</taxon>
        <taxon>Gastropoda</taxon>
        <taxon>Heterobranchia</taxon>
        <taxon>Euthyneura</taxon>
        <taxon>Tectipleura</taxon>
        <taxon>Aplysiida</taxon>
        <taxon>Aplysioidea</taxon>
        <taxon>Aplysiidae</taxon>
        <taxon>Aplysia</taxon>
    </lineage>
</organism>
<evidence type="ECO:0000255" key="1"/>
<evidence type="ECO:0000269" key="2">
    <source>
    </source>
</evidence>
<evidence type="ECO:0000269" key="3">
    <source>
    </source>
</evidence>
<evidence type="ECO:0000305" key="4"/>
<keyword id="KW-0165">Cleavage on pair of basic residues</keyword>
<keyword id="KW-0903">Direct protein sequencing</keyword>
<keyword id="KW-1015">Disulfide bond</keyword>
<keyword id="KW-0301">Gamma-carboxyglutamic acid</keyword>
<keyword id="KW-0527">Neuropeptide</keyword>
<keyword id="KW-0964">Secreted</keyword>
<keyword id="KW-0732">Signal</keyword>
<sequence length="156" mass="17627">MSKFLLQSHSANACLLTLLLTLASNLDISLANFEHSCNGYMRPHPRGLCGEDLHVIISNLCSSLGGNRRFLAKYMVKRDTENVNDKLRGILLNKKEAFSYLTKREASGSITCECCFNQCRIFELAQYCRLPDHFFSRISRTGRSNSGHAQLEDNFS</sequence>
<dbReference type="EMBL" id="AF160192">
    <property type="protein sequence ID" value="AAF80383.1"/>
    <property type="molecule type" value="mRNA"/>
</dbReference>
<dbReference type="RefSeq" id="NP_001191615.1">
    <property type="nucleotide sequence ID" value="NM_001204686.1"/>
</dbReference>
<dbReference type="EnsemblMetazoa" id="NM_001204686.1">
    <property type="protein sequence ID" value="NP_001191615.1"/>
    <property type="gene ID" value="GeneID_100533403"/>
</dbReference>
<dbReference type="GeneID" id="100533403"/>
<dbReference type="CTD" id="100533403"/>
<dbReference type="OrthoDB" id="6139049at2759"/>
<dbReference type="Proteomes" id="UP000694888">
    <property type="component" value="Unplaced"/>
</dbReference>
<dbReference type="GO" id="GO:0005576">
    <property type="term" value="C:extracellular region"/>
    <property type="evidence" value="ECO:0007669"/>
    <property type="project" value="UniProtKB-SubCell"/>
</dbReference>
<dbReference type="GO" id="GO:0005179">
    <property type="term" value="F:hormone activity"/>
    <property type="evidence" value="ECO:0007669"/>
    <property type="project" value="InterPro"/>
</dbReference>
<dbReference type="GO" id="GO:0007218">
    <property type="term" value="P:neuropeptide signaling pathway"/>
    <property type="evidence" value="ECO:0007669"/>
    <property type="project" value="UniProtKB-KW"/>
</dbReference>
<dbReference type="CDD" id="cd04366">
    <property type="entry name" value="IlGF_insulin_bombyxin_like"/>
    <property type="match status" value="1"/>
</dbReference>
<dbReference type="Gene3D" id="1.10.100.10">
    <property type="entry name" value="Insulin-like"/>
    <property type="match status" value="1"/>
</dbReference>
<dbReference type="InterPro" id="IPR016179">
    <property type="entry name" value="Insulin-like"/>
</dbReference>
<dbReference type="InterPro" id="IPR036438">
    <property type="entry name" value="Insulin-like_sf"/>
</dbReference>
<dbReference type="Pfam" id="PF00049">
    <property type="entry name" value="Insulin"/>
    <property type="match status" value="1"/>
</dbReference>
<dbReference type="SMART" id="SM00078">
    <property type="entry name" value="IlGF"/>
    <property type="match status" value="1"/>
</dbReference>
<dbReference type="SUPFAM" id="SSF56994">
    <property type="entry name" value="Insulin-like"/>
    <property type="match status" value="1"/>
</dbReference>
<comment type="function">
    <text>Involved in glucose metabolism.</text>
</comment>
<comment type="subunit">
    <text>Heterodimer of a B chain or a B chain' and an A chain probably linked by three disulfide bonds.</text>
</comment>
<comment type="subcellular location">
    <subcellularLocation>
        <location evidence="2">Secreted</location>
    </subcellularLocation>
</comment>
<comment type="tissue specificity">
    <text evidence="2">Expressed in the central region of the cerebral ganglia mostly within the F and C clusters.</text>
</comment>
<comment type="mass spectrometry" mass="4057.79" error="0.17" method="MALDI" evidence="2">
    <molecule>Insulin A chain</molecule>
    <text>Insulin A chain.</text>
</comment>
<comment type="mass spectrometry" mass="5093.74" error="0.14" method="MALDI" evidence="2">
    <molecule>Insulin B chain</molecule>
    <text>Insulin B chain.</text>
</comment>
<comment type="mass spectrometry" mass="4572.0" method="MALDI" evidence="2">
    <molecule>Insulin B chain'</molecule>
    <text>Insulin B chain'.</text>
</comment>
<comment type="mass spectrometry" mass="9146.53" error="0.03" method="MALDI" evidence="2">
    <text>Insulin (AI) with the disulfide bonds. The measured ranges are 32-76, 105-139.</text>
</comment>
<comment type="mass spectrometry" mass="8625.64" error="0.02" method="MALDI" evidence="2">
    <text>Insulin (AI') with the disulfide bonds. The measured ranges are 32-72, 105-139.</text>
</comment>
<comment type="similarity">
    <text evidence="4">Belongs to the insulin family.</text>
</comment>
<feature type="signal peptide">
    <location>
        <begin position="1"/>
        <end position="31"/>
    </location>
</feature>
<feature type="chain" id="PRO_5000056896" description="Insulin">
    <location>
        <begin position="32"/>
        <end position="156"/>
    </location>
</feature>
<feature type="peptide" id="PRO_0000307406" description="Insulin B chain">
    <location>
        <begin position="32"/>
        <end position="76"/>
    </location>
</feature>
<feature type="peptide" id="PRO_0000307407" description="Insulin B chain'">
    <location>
        <begin position="32"/>
        <end position="72"/>
    </location>
</feature>
<feature type="propeptide" id="PRO_0000307408" description="C peptide beta">
    <location>
        <begin position="79"/>
        <end position="93"/>
    </location>
</feature>
<feature type="propeptide" id="PRO_0000307409" description="C peptide alpha">
    <location>
        <begin position="96"/>
        <end position="102"/>
    </location>
</feature>
<feature type="peptide" id="PRO_0000307410" description="Insulin A chain">
    <location>
        <begin position="105"/>
        <end position="139"/>
    </location>
</feature>
<feature type="propeptide" id="PRO_0000307411" description="D peptide">
    <location>
        <begin position="141"/>
        <end position="156"/>
    </location>
</feature>
<feature type="propeptide" id="PRO_0000307412" description="D peptide short form">
    <location>
        <begin position="144"/>
        <end position="156"/>
    </location>
</feature>
<feature type="modified residue" description="4-carboxyglutamate" evidence="3">
    <location>
        <position position="152"/>
    </location>
</feature>
<feature type="disulfide bond" evidence="1">
    <location>
        <begin position="37"/>
        <end position="114"/>
    </location>
</feature>
<feature type="disulfide bond" evidence="1">
    <location>
        <begin position="49"/>
        <end position="119"/>
    </location>
</feature>
<feature type="disulfide bond" evidence="1">
    <location>
        <begin position="61"/>
        <end position="128"/>
    </location>
</feature>
<feature type="disulfide bond" evidence="1">
    <location>
        <begin position="112"/>
        <end position="115"/>
    </location>
</feature>
<protein>
    <recommendedName>
        <fullName>Insulin</fullName>
    </recommendedName>
    <component>
        <recommendedName>
            <fullName>Insulin B chain</fullName>
        </recommendedName>
    </component>
    <component>
        <recommendedName>
            <fullName>Insulin B chain'</fullName>
        </recommendedName>
    </component>
    <component>
        <recommendedName>
            <fullName>Insulin A chain</fullName>
        </recommendedName>
    </component>
</protein>
<reference key="1">
    <citation type="journal article" date="1999" name="J. Neurosci.">
        <title>Insulin prohormone processing, distribution, and relation to metabolism in Aplysia californica.</title>
        <authorList>
            <person name="Floyd P.D."/>
            <person name="Li L."/>
            <person name="Rubakhin S.S."/>
            <person name="Sweedler J.V."/>
            <person name="Horn C.C."/>
            <person name="Kupfermann I."/>
            <person name="Alexeeva V.Y."/>
            <person name="Ellis T.A."/>
            <person name="Dembrow N.C."/>
            <person name="Weiss K.R."/>
            <person name="Vilim F.S."/>
        </authorList>
    </citation>
    <scope>NUCLEOTIDE SEQUENCE [MRNA]</scope>
    <scope>PROTEIN SEQUENCE OF 79-93</scope>
    <scope>PROTEOLYTIC PROCESSING</scope>
    <scope>SUBCELLULAR LOCATION</scope>
    <scope>TISSUE SPECIFICITY</scope>
    <scope>MASS SPECTROMETRY</scope>
    <source>
        <tissue>CNS</tissue>
    </source>
</reference>
<reference key="2">
    <citation type="journal article" date="2006" name="Neurochem. Int.">
        <title>The first gamma-carboxyglutamate-containing neuropeptide.</title>
        <authorList>
            <person name="Jakubowski J.A."/>
            <person name="Hatcher N.G."/>
            <person name="Xie F."/>
            <person name="Sweedler J.V."/>
        </authorList>
    </citation>
    <scope>PROTEIN SEQUENCE OF 141-156</scope>
    <scope>GAMMA-CARBOXYGLUTAMATION AT GLU-152</scope>
    <scope>IDENTIFICATION BY MASS SPECTROMETRY</scope>
</reference>
<accession>Q9NDE7</accession>
<name>INS_APLCA</name>